<feature type="chain" id="PRO_1000046273" description="Large ribosomal subunit protein uL11">
    <location>
        <begin position="1"/>
        <end position="140"/>
    </location>
</feature>
<evidence type="ECO:0000255" key="1">
    <source>
        <dbReference type="HAMAP-Rule" id="MF_00736"/>
    </source>
</evidence>
<evidence type="ECO:0000305" key="2"/>
<proteinExistence type="inferred from homology"/>
<keyword id="KW-0488">Methylation</keyword>
<keyword id="KW-0687">Ribonucleoprotein</keyword>
<keyword id="KW-0689">Ribosomal protein</keyword>
<keyword id="KW-0694">RNA-binding</keyword>
<keyword id="KW-0699">rRNA-binding</keyword>
<organism>
    <name type="scientific">Staphylococcus aureus (strain Mu3 / ATCC 700698)</name>
    <dbReference type="NCBI Taxonomy" id="418127"/>
    <lineage>
        <taxon>Bacteria</taxon>
        <taxon>Bacillati</taxon>
        <taxon>Bacillota</taxon>
        <taxon>Bacilli</taxon>
        <taxon>Bacillales</taxon>
        <taxon>Staphylococcaceae</taxon>
        <taxon>Staphylococcus</taxon>
    </lineage>
</organism>
<name>RL11_STAA1</name>
<gene>
    <name evidence="1" type="primary">rplK</name>
    <name type="ordered locus">SAHV_0535</name>
</gene>
<protein>
    <recommendedName>
        <fullName evidence="1">Large ribosomal subunit protein uL11</fullName>
    </recommendedName>
    <alternativeName>
        <fullName evidence="2">50S ribosomal protein L11</fullName>
    </alternativeName>
</protein>
<accession>A7WYW0</accession>
<sequence>MAKKVDKVVKLQIPAGKANPAPPVGPALGQAGVNIMGFCKEFNARTQDQAGLIIPVEISVYEDRSFTFITKTPPAPVLLKKAAGIEKGSGEPNKTKVATVTKDQVREIANSKMQDLNAADEEAAMRIIEGTARSMGIVVE</sequence>
<dbReference type="EMBL" id="AP009324">
    <property type="protein sequence ID" value="BAF77418.1"/>
    <property type="molecule type" value="Genomic_DNA"/>
</dbReference>
<dbReference type="RefSeq" id="WP_001085792.1">
    <property type="nucleotide sequence ID" value="NC_009782.1"/>
</dbReference>
<dbReference type="SMR" id="A7WYW0"/>
<dbReference type="GeneID" id="98344871"/>
<dbReference type="KEGG" id="saw:SAHV_0535"/>
<dbReference type="HOGENOM" id="CLU_074237_2_1_9"/>
<dbReference type="GO" id="GO:0022625">
    <property type="term" value="C:cytosolic large ribosomal subunit"/>
    <property type="evidence" value="ECO:0007669"/>
    <property type="project" value="TreeGrafter"/>
</dbReference>
<dbReference type="GO" id="GO:0070180">
    <property type="term" value="F:large ribosomal subunit rRNA binding"/>
    <property type="evidence" value="ECO:0007669"/>
    <property type="project" value="UniProtKB-UniRule"/>
</dbReference>
<dbReference type="GO" id="GO:0003735">
    <property type="term" value="F:structural constituent of ribosome"/>
    <property type="evidence" value="ECO:0007669"/>
    <property type="project" value="InterPro"/>
</dbReference>
<dbReference type="GO" id="GO:0006412">
    <property type="term" value="P:translation"/>
    <property type="evidence" value="ECO:0007669"/>
    <property type="project" value="UniProtKB-UniRule"/>
</dbReference>
<dbReference type="CDD" id="cd00349">
    <property type="entry name" value="Ribosomal_L11"/>
    <property type="match status" value="1"/>
</dbReference>
<dbReference type="FunFam" id="1.10.10.250:FF:000001">
    <property type="entry name" value="50S ribosomal protein L11"/>
    <property type="match status" value="1"/>
</dbReference>
<dbReference type="FunFam" id="3.30.1550.10:FF:000001">
    <property type="entry name" value="50S ribosomal protein L11"/>
    <property type="match status" value="1"/>
</dbReference>
<dbReference type="Gene3D" id="1.10.10.250">
    <property type="entry name" value="Ribosomal protein L11, C-terminal domain"/>
    <property type="match status" value="1"/>
</dbReference>
<dbReference type="Gene3D" id="3.30.1550.10">
    <property type="entry name" value="Ribosomal protein L11/L12, N-terminal domain"/>
    <property type="match status" value="1"/>
</dbReference>
<dbReference type="HAMAP" id="MF_00736">
    <property type="entry name" value="Ribosomal_uL11"/>
    <property type="match status" value="1"/>
</dbReference>
<dbReference type="InterPro" id="IPR000911">
    <property type="entry name" value="Ribosomal_uL11"/>
</dbReference>
<dbReference type="InterPro" id="IPR006519">
    <property type="entry name" value="Ribosomal_uL11_bac-typ"/>
</dbReference>
<dbReference type="InterPro" id="IPR020783">
    <property type="entry name" value="Ribosomal_uL11_C"/>
</dbReference>
<dbReference type="InterPro" id="IPR036769">
    <property type="entry name" value="Ribosomal_uL11_C_sf"/>
</dbReference>
<dbReference type="InterPro" id="IPR020785">
    <property type="entry name" value="Ribosomal_uL11_CS"/>
</dbReference>
<dbReference type="InterPro" id="IPR020784">
    <property type="entry name" value="Ribosomal_uL11_N"/>
</dbReference>
<dbReference type="InterPro" id="IPR036796">
    <property type="entry name" value="Ribosomal_uL11_N_sf"/>
</dbReference>
<dbReference type="NCBIfam" id="TIGR01632">
    <property type="entry name" value="L11_bact"/>
    <property type="match status" value="1"/>
</dbReference>
<dbReference type="PANTHER" id="PTHR11661">
    <property type="entry name" value="60S RIBOSOMAL PROTEIN L12"/>
    <property type="match status" value="1"/>
</dbReference>
<dbReference type="PANTHER" id="PTHR11661:SF1">
    <property type="entry name" value="LARGE RIBOSOMAL SUBUNIT PROTEIN UL11M"/>
    <property type="match status" value="1"/>
</dbReference>
<dbReference type="Pfam" id="PF00298">
    <property type="entry name" value="Ribosomal_L11"/>
    <property type="match status" value="1"/>
</dbReference>
<dbReference type="Pfam" id="PF03946">
    <property type="entry name" value="Ribosomal_L11_N"/>
    <property type="match status" value="1"/>
</dbReference>
<dbReference type="SMART" id="SM00649">
    <property type="entry name" value="RL11"/>
    <property type="match status" value="1"/>
</dbReference>
<dbReference type="SUPFAM" id="SSF54747">
    <property type="entry name" value="Ribosomal L11/L12e N-terminal domain"/>
    <property type="match status" value="1"/>
</dbReference>
<dbReference type="SUPFAM" id="SSF46906">
    <property type="entry name" value="Ribosomal protein L11, C-terminal domain"/>
    <property type="match status" value="1"/>
</dbReference>
<dbReference type="PROSITE" id="PS00359">
    <property type="entry name" value="RIBOSOMAL_L11"/>
    <property type="match status" value="1"/>
</dbReference>
<reference key="1">
    <citation type="journal article" date="2008" name="Antimicrob. Agents Chemother.">
        <title>Mutated response regulator graR is responsible for phenotypic conversion of Staphylococcus aureus from heterogeneous vancomycin-intermediate resistance to vancomycin-intermediate resistance.</title>
        <authorList>
            <person name="Neoh H.-M."/>
            <person name="Cui L."/>
            <person name="Yuzawa H."/>
            <person name="Takeuchi F."/>
            <person name="Matsuo M."/>
            <person name="Hiramatsu K."/>
        </authorList>
    </citation>
    <scope>NUCLEOTIDE SEQUENCE [LARGE SCALE GENOMIC DNA]</scope>
    <source>
        <strain>Mu3 / ATCC 700698</strain>
    </source>
</reference>
<comment type="function">
    <text evidence="1">Forms part of the ribosomal stalk which helps the ribosome interact with GTP-bound translation factors.</text>
</comment>
<comment type="subunit">
    <text evidence="1">Part of the ribosomal stalk of the 50S ribosomal subunit. Interacts with L10 and the large rRNA to form the base of the stalk. L10 forms an elongated spine to which L12 dimers bind in a sequential fashion forming a multimeric L10(L12)X complex.</text>
</comment>
<comment type="PTM">
    <text evidence="1">One or more lysine residues are methylated.</text>
</comment>
<comment type="similarity">
    <text evidence="1">Belongs to the universal ribosomal protein uL11 family.</text>
</comment>